<evidence type="ECO:0000255" key="1">
    <source>
        <dbReference type="HAMAP-Rule" id="MF_01347"/>
    </source>
</evidence>
<proteinExistence type="inferred from homology"/>
<protein>
    <recommendedName>
        <fullName evidence="1">ATP synthase subunit beta</fullName>
        <ecNumber evidence="1">7.1.2.2</ecNumber>
    </recommendedName>
    <alternativeName>
        <fullName evidence="1">ATP synthase F1 sector subunit beta</fullName>
    </alternativeName>
    <alternativeName>
        <fullName evidence="1">F-ATPase subunit beta</fullName>
    </alternativeName>
</protein>
<feature type="chain" id="PRO_1000055151" description="ATP synthase subunit beta">
    <location>
        <begin position="1"/>
        <end position="476"/>
    </location>
</feature>
<feature type="binding site" evidence="1">
    <location>
        <begin position="154"/>
        <end position="161"/>
    </location>
    <ligand>
        <name>ATP</name>
        <dbReference type="ChEBI" id="CHEBI:30616"/>
    </ligand>
</feature>
<accession>Q13DP2</accession>
<name>ATPB_RHOPS</name>
<sequence length="476" mass="50800">MATPANQTGRITQVIGAVVDVQFEGHLPAILNAIETKNGDNRLVLEVAQHLGESTVRTIAMDTTEGLVRGQEVTDTGSPIMVPVGIGTLGRIMNVIGEPVDEQGPVANEGLRPIHAEAPLYTDQSTEAEILVTGIKVVDLLAPYAKGGKIGLFGGAGVGKTVLIQELINNVAKAHGGYSVFAGVGERTREGNDLYHEFIESGVNKKGGGEGSKCALVYGQMNEPPGARARVALSGLTVAEHFRDQGQDVLFFVDNIFRFTQAGSEVSALLGRIPSAVGYQPTLATDMGALQERITTTHKGSITSVQAIYVPADDLTDPAPATSFAHLDATTVLNRAISEKGIYPAVDPLDSTSRMLSPLIVGEEHYQTARMVQQVLQKYKSLQDIIAILGMDELSEEDKLAVARARKIERFLSQPFFVAEIFTGSPGKFVDLADTIKGFRAICEGKYDHLPEAAFYMVGAIEEAVEKGKKLAAEAA</sequence>
<comment type="function">
    <text evidence="1">Produces ATP from ADP in the presence of a proton gradient across the membrane. The catalytic sites are hosted primarily by the beta subunits.</text>
</comment>
<comment type="catalytic activity">
    <reaction evidence="1">
        <text>ATP + H2O + 4 H(+)(in) = ADP + phosphate + 5 H(+)(out)</text>
        <dbReference type="Rhea" id="RHEA:57720"/>
        <dbReference type="ChEBI" id="CHEBI:15377"/>
        <dbReference type="ChEBI" id="CHEBI:15378"/>
        <dbReference type="ChEBI" id="CHEBI:30616"/>
        <dbReference type="ChEBI" id="CHEBI:43474"/>
        <dbReference type="ChEBI" id="CHEBI:456216"/>
        <dbReference type="EC" id="7.1.2.2"/>
    </reaction>
</comment>
<comment type="subunit">
    <text evidence="1">F-type ATPases have 2 components, CF(1) - the catalytic core - and CF(0) - the membrane proton channel. CF(1) has five subunits: alpha(3), beta(3), gamma(1), delta(1), epsilon(1). CF(0) has four main subunits: a(1), b(1), b'(1) and c(9-12).</text>
</comment>
<comment type="subcellular location">
    <subcellularLocation>
        <location evidence="1">Cell inner membrane</location>
        <topology evidence="1">Peripheral membrane protein</topology>
    </subcellularLocation>
</comment>
<comment type="similarity">
    <text evidence="1">Belongs to the ATPase alpha/beta chains family.</text>
</comment>
<keyword id="KW-0066">ATP synthesis</keyword>
<keyword id="KW-0067">ATP-binding</keyword>
<keyword id="KW-0997">Cell inner membrane</keyword>
<keyword id="KW-1003">Cell membrane</keyword>
<keyword id="KW-0139">CF(1)</keyword>
<keyword id="KW-0375">Hydrogen ion transport</keyword>
<keyword id="KW-0406">Ion transport</keyword>
<keyword id="KW-0472">Membrane</keyword>
<keyword id="KW-0547">Nucleotide-binding</keyword>
<keyword id="KW-1278">Translocase</keyword>
<keyword id="KW-0813">Transport</keyword>
<organism>
    <name type="scientific">Rhodopseudomonas palustris (strain BisB5)</name>
    <dbReference type="NCBI Taxonomy" id="316057"/>
    <lineage>
        <taxon>Bacteria</taxon>
        <taxon>Pseudomonadati</taxon>
        <taxon>Pseudomonadota</taxon>
        <taxon>Alphaproteobacteria</taxon>
        <taxon>Hyphomicrobiales</taxon>
        <taxon>Nitrobacteraceae</taxon>
        <taxon>Rhodopseudomonas</taxon>
    </lineage>
</organism>
<dbReference type="EC" id="7.1.2.2" evidence="1"/>
<dbReference type="EMBL" id="CP000283">
    <property type="protein sequence ID" value="ABE37797.1"/>
    <property type="molecule type" value="Genomic_DNA"/>
</dbReference>
<dbReference type="SMR" id="Q13DP2"/>
<dbReference type="STRING" id="316057.RPD_0559"/>
<dbReference type="KEGG" id="rpd:RPD_0559"/>
<dbReference type="eggNOG" id="COG0055">
    <property type="taxonomic scope" value="Bacteria"/>
</dbReference>
<dbReference type="HOGENOM" id="CLU_022398_0_2_5"/>
<dbReference type="BioCyc" id="RPAL316057:RPD_RS02870-MONOMER"/>
<dbReference type="Proteomes" id="UP000001818">
    <property type="component" value="Chromosome"/>
</dbReference>
<dbReference type="GO" id="GO:0005886">
    <property type="term" value="C:plasma membrane"/>
    <property type="evidence" value="ECO:0007669"/>
    <property type="project" value="UniProtKB-SubCell"/>
</dbReference>
<dbReference type="GO" id="GO:0045259">
    <property type="term" value="C:proton-transporting ATP synthase complex"/>
    <property type="evidence" value="ECO:0007669"/>
    <property type="project" value="UniProtKB-KW"/>
</dbReference>
<dbReference type="GO" id="GO:0005524">
    <property type="term" value="F:ATP binding"/>
    <property type="evidence" value="ECO:0007669"/>
    <property type="project" value="UniProtKB-UniRule"/>
</dbReference>
<dbReference type="GO" id="GO:0016887">
    <property type="term" value="F:ATP hydrolysis activity"/>
    <property type="evidence" value="ECO:0007669"/>
    <property type="project" value="InterPro"/>
</dbReference>
<dbReference type="GO" id="GO:0046933">
    <property type="term" value="F:proton-transporting ATP synthase activity, rotational mechanism"/>
    <property type="evidence" value="ECO:0007669"/>
    <property type="project" value="UniProtKB-UniRule"/>
</dbReference>
<dbReference type="CDD" id="cd18110">
    <property type="entry name" value="ATP-synt_F1_beta_C"/>
    <property type="match status" value="1"/>
</dbReference>
<dbReference type="CDD" id="cd18115">
    <property type="entry name" value="ATP-synt_F1_beta_N"/>
    <property type="match status" value="1"/>
</dbReference>
<dbReference type="CDD" id="cd01133">
    <property type="entry name" value="F1-ATPase_beta_CD"/>
    <property type="match status" value="1"/>
</dbReference>
<dbReference type="FunFam" id="1.10.1140.10:FF:000001">
    <property type="entry name" value="ATP synthase subunit beta"/>
    <property type="match status" value="1"/>
</dbReference>
<dbReference type="FunFam" id="2.40.10.170:FF:000004">
    <property type="entry name" value="ATP synthase subunit beta"/>
    <property type="match status" value="1"/>
</dbReference>
<dbReference type="FunFam" id="3.40.50.300:FF:000026">
    <property type="entry name" value="ATP synthase subunit beta"/>
    <property type="match status" value="1"/>
</dbReference>
<dbReference type="Gene3D" id="2.40.10.170">
    <property type="match status" value="1"/>
</dbReference>
<dbReference type="Gene3D" id="1.10.1140.10">
    <property type="entry name" value="Bovine Mitochondrial F1-atpase, Atp Synthase Beta Chain, Chain D, domain 3"/>
    <property type="match status" value="1"/>
</dbReference>
<dbReference type="Gene3D" id="3.40.50.300">
    <property type="entry name" value="P-loop containing nucleotide triphosphate hydrolases"/>
    <property type="match status" value="1"/>
</dbReference>
<dbReference type="HAMAP" id="MF_01347">
    <property type="entry name" value="ATP_synth_beta_bact"/>
    <property type="match status" value="1"/>
</dbReference>
<dbReference type="InterPro" id="IPR003593">
    <property type="entry name" value="AAA+_ATPase"/>
</dbReference>
<dbReference type="InterPro" id="IPR055190">
    <property type="entry name" value="ATP-synt_VA_C"/>
</dbReference>
<dbReference type="InterPro" id="IPR005722">
    <property type="entry name" value="ATP_synth_F1_bsu"/>
</dbReference>
<dbReference type="InterPro" id="IPR020003">
    <property type="entry name" value="ATPase_a/bsu_AS"/>
</dbReference>
<dbReference type="InterPro" id="IPR050053">
    <property type="entry name" value="ATPase_alpha/beta_chains"/>
</dbReference>
<dbReference type="InterPro" id="IPR004100">
    <property type="entry name" value="ATPase_F1/V1/A1_a/bsu_N"/>
</dbReference>
<dbReference type="InterPro" id="IPR036121">
    <property type="entry name" value="ATPase_F1/V1/A1_a/bsu_N_sf"/>
</dbReference>
<dbReference type="InterPro" id="IPR000194">
    <property type="entry name" value="ATPase_F1/V1/A1_a/bsu_nucl-bd"/>
</dbReference>
<dbReference type="InterPro" id="IPR024034">
    <property type="entry name" value="ATPase_F1/V1_b/a_C"/>
</dbReference>
<dbReference type="InterPro" id="IPR027417">
    <property type="entry name" value="P-loop_NTPase"/>
</dbReference>
<dbReference type="NCBIfam" id="TIGR01039">
    <property type="entry name" value="atpD"/>
    <property type="match status" value="1"/>
</dbReference>
<dbReference type="PANTHER" id="PTHR15184">
    <property type="entry name" value="ATP SYNTHASE"/>
    <property type="match status" value="1"/>
</dbReference>
<dbReference type="PANTHER" id="PTHR15184:SF71">
    <property type="entry name" value="ATP SYNTHASE SUBUNIT BETA, MITOCHONDRIAL"/>
    <property type="match status" value="1"/>
</dbReference>
<dbReference type="Pfam" id="PF00006">
    <property type="entry name" value="ATP-synt_ab"/>
    <property type="match status" value="1"/>
</dbReference>
<dbReference type="Pfam" id="PF02874">
    <property type="entry name" value="ATP-synt_ab_N"/>
    <property type="match status" value="1"/>
</dbReference>
<dbReference type="Pfam" id="PF22919">
    <property type="entry name" value="ATP-synt_VA_C"/>
    <property type="match status" value="1"/>
</dbReference>
<dbReference type="PIRSF" id="PIRSF039072">
    <property type="entry name" value="ATPase_subunit_beta"/>
    <property type="match status" value="1"/>
</dbReference>
<dbReference type="SMART" id="SM00382">
    <property type="entry name" value="AAA"/>
    <property type="match status" value="1"/>
</dbReference>
<dbReference type="SUPFAM" id="SSF47917">
    <property type="entry name" value="C-terminal domain of alpha and beta subunits of F1 ATP synthase"/>
    <property type="match status" value="1"/>
</dbReference>
<dbReference type="SUPFAM" id="SSF50615">
    <property type="entry name" value="N-terminal domain of alpha and beta subunits of F1 ATP synthase"/>
    <property type="match status" value="1"/>
</dbReference>
<dbReference type="SUPFAM" id="SSF52540">
    <property type="entry name" value="P-loop containing nucleoside triphosphate hydrolases"/>
    <property type="match status" value="1"/>
</dbReference>
<dbReference type="PROSITE" id="PS00152">
    <property type="entry name" value="ATPASE_ALPHA_BETA"/>
    <property type="match status" value="1"/>
</dbReference>
<gene>
    <name evidence="1" type="primary">atpD</name>
    <name type="ordered locus">RPD_0559</name>
</gene>
<reference key="1">
    <citation type="submission" date="2006-03" db="EMBL/GenBank/DDBJ databases">
        <title>Complete sequence of Rhodopseudomonas palustris BisB5.</title>
        <authorList>
            <consortium name="US DOE Joint Genome Institute"/>
            <person name="Copeland A."/>
            <person name="Lucas S."/>
            <person name="Lapidus A."/>
            <person name="Barry K."/>
            <person name="Detter J.C."/>
            <person name="Glavina del Rio T."/>
            <person name="Hammon N."/>
            <person name="Israni S."/>
            <person name="Dalin E."/>
            <person name="Tice H."/>
            <person name="Pitluck S."/>
            <person name="Chain P."/>
            <person name="Malfatti S."/>
            <person name="Shin M."/>
            <person name="Vergez L."/>
            <person name="Schmutz J."/>
            <person name="Larimer F."/>
            <person name="Land M."/>
            <person name="Hauser L."/>
            <person name="Pelletier D.A."/>
            <person name="Kyrpides N."/>
            <person name="Lykidis A."/>
            <person name="Oda Y."/>
            <person name="Harwood C.S."/>
            <person name="Richardson P."/>
        </authorList>
    </citation>
    <scope>NUCLEOTIDE SEQUENCE [LARGE SCALE GENOMIC DNA]</scope>
    <source>
        <strain>BisB5</strain>
    </source>
</reference>